<protein>
    <recommendedName>
        <fullName evidence="4 5">Piperine synthase</fullName>
        <shortName evidence="7">Piperidine N-piperoyltransferase</shortName>
        <shortName evidence="4">Piperoyl-CoA:piperidine piperoyl transferase</shortName>
        <ecNumber evidence="2">2.3.1.145</ecNumber>
    </recommendedName>
    <alternativeName>
        <fullName evidence="4">BAHD-type acyl transferase 2</fullName>
        <shortName evidence="4">PipBAHD2</shortName>
    </alternativeName>
</protein>
<sequence length="461" mass="51169">MAPSSQLEFNVVRKQPELLPPAEPTPFEWKELSDIDDQDGLRLHISGFFIYPPSTMSNVGRDNVARDIRLGLSKAMVFYYPLAGRIREGPNRKLSVECTGEGIMYCEADADVRLEQFGDIGALSMPFPFMDKVMFETVDDGILGTPLMYFQSTRFICGGIVIAGCYNHAIADGLGFYMFMAAAAQLARGAASPTPLPVWQRERLLSRVPPRVTFIHHEYIHDTPKTETANPLDNEPWPLHSIFFTRVDVAALRAQLPGHLRKSATSFEIISACLWRCRTAALRFAPDELSRLIIAVNARTKFGPPLPQGYYGNSIMLPMVVSEAGKLVLSGLGYAVELVIEAKGKVTEEYVKSVADYLVLNGRPHYVVTNTYLVSDLRQLVEMSKFDWGWGKPAYVGPADVGENAISFLATLKNGEEEGVVVPIRLPESAVGRFKSEVSKMVSFGCLEDVKPNRDGYLSRM</sequence>
<dbReference type="EC" id="2.3.1.145" evidence="2"/>
<dbReference type="EMBL" id="MW354956">
    <property type="protein sequence ID" value="QUS53100.1"/>
    <property type="molecule type" value="mRNA"/>
</dbReference>
<dbReference type="SMR" id="P0DO56"/>
<dbReference type="GO" id="GO:0005737">
    <property type="term" value="C:cytoplasm"/>
    <property type="evidence" value="ECO:0007669"/>
    <property type="project" value="UniProtKB-SubCell"/>
</dbReference>
<dbReference type="GO" id="GO:0050199">
    <property type="term" value="F:piperidine N-piperoyltransferase activity"/>
    <property type="evidence" value="ECO:0000314"/>
    <property type="project" value="UniProtKB"/>
</dbReference>
<dbReference type="GO" id="GO:0160181">
    <property type="term" value="P:piperine biosynthetic process"/>
    <property type="evidence" value="ECO:0000314"/>
    <property type="project" value="UniProtKB"/>
</dbReference>
<dbReference type="Gene3D" id="3.30.559.10">
    <property type="entry name" value="Chloramphenicol acetyltransferase-like domain"/>
    <property type="match status" value="2"/>
</dbReference>
<dbReference type="InterPro" id="IPR023213">
    <property type="entry name" value="CAT-like_dom_sf"/>
</dbReference>
<dbReference type="InterPro" id="IPR050898">
    <property type="entry name" value="Plant_acyltransferase"/>
</dbReference>
<dbReference type="PANTHER" id="PTHR31147">
    <property type="entry name" value="ACYL TRANSFERASE 4"/>
    <property type="match status" value="1"/>
</dbReference>
<dbReference type="PANTHER" id="PTHR31147:SF66">
    <property type="entry name" value="OS05G0315700 PROTEIN"/>
    <property type="match status" value="1"/>
</dbReference>
<dbReference type="Pfam" id="PF02458">
    <property type="entry name" value="Transferase"/>
    <property type="match status" value="1"/>
</dbReference>
<feature type="chain" id="PRO_0000456905" description="Piperine synthase">
    <location>
        <begin position="1"/>
        <end position="461"/>
    </location>
</feature>
<feature type="short sequence motif" description="Microbody targeting signal" evidence="1">
    <location>
        <begin position="459"/>
        <end position="461"/>
    </location>
</feature>
<feature type="active site" description="Proton acceptor" evidence="1">
    <location>
        <position position="168"/>
    </location>
</feature>
<feature type="active site" description="Proton acceptor" evidence="1">
    <location>
        <position position="387"/>
    </location>
</feature>
<comment type="function">
    <text evidence="2">Involved in the biosynthesis of aromatic piperamides natural products such as piperine (1-piperoyl-piperidine), the pungent principle contributing, together with several terpenoids, to the aromatic properties of black pepper fruits, and displaying numerous pharmacological activities such as antiproliferative, antitumor, antiangiogenesis, antioxidant, antidiabetic, antiobesity, cardioprotective, antimicrobial, antiaging, and immunomodulatory effects (PubMed:33833371). Mediates mainly the conversion of piperidine and piperoyl-CoA to piperine (PubMed:33833371). Can also use pyrrolidine and isobutylamine as acceptors and 3,4-methylenedioxycinnamoyl-CoA as an alternative CoA-donor with a lower efficiency (PubMed:33833371).</text>
</comment>
<comment type="catalytic activity">
    <reaction evidence="2">
        <text>piperidine + (E,E)-piperoyl-CoA = piperine + CoA + H(+)</text>
        <dbReference type="Rhea" id="RHEA:14561"/>
        <dbReference type="ChEBI" id="CHEBI:15378"/>
        <dbReference type="ChEBI" id="CHEBI:28821"/>
        <dbReference type="ChEBI" id="CHEBI:57287"/>
        <dbReference type="ChEBI" id="CHEBI:57325"/>
        <dbReference type="ChEBI" id="CHEBI:589779"/>
        <dbReference type="EC" id="2.3.1.145"/>
    </reaction>
    <physiologicalReaction direction="left-to-right" evidence="2">
        <dbReference type="Rhea" id="RHEA:14562"/>
    </physiologicalReaction>
</comment>
<comment type="catalytic activity">
    <reaction evidence="2">
        <text>pyrrolidine + (E,E)-piperoyl-CoA = piperyline + CoA + H(+)</text>
        <dbReference type="Rhea" id="RHEA:73663"/>
        <dbReference type="ChEBI" id="CHEBI:9691"/>
        <dbReference type="ChEBI" id="CHEBI:15378"/>
        <dbReference type="ChEBI" id="CHEBI:52145"/>
        <dbReference type="ChEBI" id="CHEBI:57287"/>
        <dbReference type="ChEBI" id="CHEBI:57325"/>
    </reaction>
    <physiologicalReaction direction="left-to-right" evidence="2">
        <dbReference type="Rhea" id="RHEA:73664"/>
    </physiologicalReaction>
</comment>
<comment type="catalytic activity">
    <reaction evidence="2">
        <text>(E,E)-piperoyl-CoA + 2-methylpropan-1-amine = (E,E)-piperlonguminine + CoA + H(+)</text>
        <dbReference type="Rhea" id="RHEA:73667"/>
        <dbReference type="ChEBI" id="CHEBI:15378"/>
        <dbReference type="ChEBI" id="CHEBI:57287"/>
        <dbReference type="ChEBI" id="CHEBI:57325"/>
        <dbReference type="ChEBI" id="CHEBI:57601"/>
        <dbReference type="ChEBI" id="CHEBI:173942"/>
    </reaction>
    <physiologicalReaction direction="left-to-right" evidence="2">
        <dbReference type="Rhea" id="RHEA:73668"/>
    </physiologicalReaction>
</comment>
<comment type="biophysicochemical properties">
    <kinetics>
        <KM evidence="2">342 uM for piperoyl-CoA</KM>
        <KM evidence="2">7.6 mM for piperidine</KM>
        <text evidence="2">kcat is 1.01 sec(-1) with piperoyl-CoA as substrate (PubMed:33833371). kcat is 0.47 sec(-1) with piperidine as substrate (PubMed:33833371).</text>
    </kinetics>
    <phDependence>
        <text evidence="2">Optimum pH is 8.0.</text>
    </phDependence>
</comment>
<comment type="pathway">
    <text evidence="2">Aromatic compound metabolism.</text>
</comment>
<comment type="subunit">
    <text evidence="2 3">Monomer.</text>
</comment>
<comment type="subcellular location">
    <subcellularLocation>
        <location evidence="3">Cytoplasm</location>
    </subcellularLocation>
    <text evidence="3">Localized at residual cytoplasmic structures in special cells of the fruit perisperm.</text>
</comment>
<comment type="tissue specificity">
    <text evidence="2 3">Confined to immature fruits perisperm (PubMed:33833371, PubMed:35634755). Also detectable in roots (PubMed:33833371).</text>
</comment>
<comment type="developmental stage">
    <text evidence="2 3">Starts to accumulate in spadices between 20 and 30 days post anthesis and reaches highest levels between 40 and 75 days post anthesis.</text>
</comment>
<comment type="similarity">
    <text evidence="6">Belongs to the plant acyltransferase family.</text>
</comment>
<evidence type="ECO:0000255" key="1"/>
<evidence type="ECO:0000269" key="2">
    <source>
    </source>
</evidence>
<evidence type="ECO:0000269" key="3">
    <source>
    </source>
</evidence>
<evidence type="ECO:0000303" key="4">
    <source>
    </source>
</evidence>
<evidence type="ECO:0000303" key="5">
    <source>
    </source>
</evidence>
<evidence type="ECO:0000305" key="6"/>
<evidence type="ECO:0000305" key="7">
    <source>
    </source>
</evidence>
<keyword id="KW-0012">Acyltransferase</keyword>
<keyword id="KW-0963">Cytoplasm</keyword>
<keyword id="KW-0808">Transferase</keyword>
<reference key="1">
    <citation type="journal article" date="2021" name="Commun. Biol.">
        <title>Identification and characterization of piperine synthase from black pepper, Piper nigrum L.</title>
        <authorList>
            <person name="Schnabel A."/>
            <person name="Athmer B."/>
            <person name="Manke K."/>
            <person name="Schumacher F."/>
            <person name="Cotinguiba F."/>
            <person name="Vogt T."/>
        </authorList>
    </citation>
    <scope>NUCLEOTIDE SEQUENCE [MRNA]</scope>
    <scope>FUNCTION</scope>
    <scope>CATALYTIC ACTIVITY</scope>
    <scope>TISSUE SPECIFICITY</scope>
    <scope>DEVELOPMENTAL STAGE</scope>
    <scope>BIOPHYSICOCHEMICAL PROPERTIES</scope>
    <scope>PATHWAY</scope>
    <scope>SUBUNIT</scope>
    <source>
        <tissue>Fruit</tissue>
    </source>
</reference>
<reference key="2">
    <citation type="journal article" date="2021" name="Phytother. Res.">
        <title>Piperine: A review of its biological effects.</title>
        <authorList>
            <person name="Haq I.U."/>
            <person name="Imran M."/>
            <person name="Nadeem M."/>
            <person name="Tufail T."/>
            <person name="Gondal T.A."/>
            <person name="Mubarak M.S."/>
        </authorList>
    </citation>
    <scope>REVIEW ON PIPERINE PHARMACOLOGICAL AND CULINARY USES</scope>
</reference>
<reference key="3">
    <citation type="journal article" date="2022" name="Plant J.">
        <title>The terminal enzymatic step in piperine biosynthesis is co-localized with the product piperine in specialized cells of black pepper (Piper nigrum L.).</title>
        <authorList>
            <person name="Jaeckel L."/>
            <person name="Schnabel A."/>
            <person name="Stellmach H."/>
            <person name="Klauss U."/>
            <person name="Matschi S."/>
            <person name="Hause G."/>
            <person name="Vogt T."/>
        </authorList>
    </citation>
    <scope>IDENTIFICATION BY MASS SPECTROMETRY</scope>
    <scope>SUBCELLULAR LOCATION</scope>
    <scope>TISSUE SPECIFICITY</scope>
    <scope>DEVELOPMENTAL STAGE</scope>
    <scope>SUBUNIT</scope>
    <source>
        <tissue>Fruit</tissue>
    </source>
</reference>
<gene>
    <name evidence="4 5" type="primary">PS</name>
    <name evidence="4" type="synonym">BAHD2</name>
</gene>
<proteinExistence type="evidence at protein level"/>
<name>PS_PIPNI</name>
<organism>
    <name type="scientific">Piper nigrum</name>
    <name type="common">Black pepper</name>
    <dbReference type="NCBI Taxonomy" id="13216"/>
    <lineage>
        <taxon>Eukaryota</taxon>
        <taxon>Viridiplantae</taxon>
        <taxon>Streptophyta</taxon>
        <taxon>Embryophyta</taxon>
        <taxon>Tracheophyta</taxon>
        <taxon>Spermatophyta</taxon>
        <taxon>Magnoliopsida</taxon>
        <taxon>Magnoliidae</taxon>
        <taxon>Piperales</taxon>
        <taxon>Piperaceae</taxon>
        <taxon>Piper</taxon>
    </lineage>
</organism>
<accession>P0DO56</accession>